<organism>
    <name type="scientific">Debaryomyces hansenii (strain ATCC 36239 / CBS 767 / BCRC 21394 / JCM 1990 / NBRC 0083 / IGC 2968)</name>
    <name type="common">Yeast</name>
    <name type="synonym">Torulaspora hansenii</name>
    <dbReference type="NCBI Taxonomy" id="284592"/>
    <lineage>
        <taxon>Eukaryota</taxon>
        <taxon>Fungi</taxon>
        <taxon>Dikarya</taxon>
        <taxon>Ascomycota</taxon>
        <taxon>Saccharomycotina</taxon>
        <taxon>Pichiomycetes</taxon>
        <taxon>Debaryomycetaceae</taxon>
        <taxon>Debaryomyces</taxon>
    </lineage>
</organism>
<dbReference type="EMBL" id="CR382137">
    <property type="protein sequence ID" value="CAG88072.2"/>
    <property type="molecule type" value="Genomic_DNA"/>
</dbReference>
<dbReference type="RefSeq" id="XP_459833.2">
    <property type="nucleotide sequence ID" value="XM_459833.1"/>
</dbReference>
<dbReference type="SMR" id="Q6BPN7"/>
<dbReference type="FunCoup" id="Q6BPN7">
    <property type="interactions" value="65"/>
</dbReference>
<dbReference type="STRING" id="284592.Q6BPN7"/>
<dbReference type="GeneID" id="2901905"/>
<dbReference type="KEGG" id="dha:DEHA2E12122g"/>
<dbReference type="VEuPathDB" id="FungiDB:DEHA2E12122g"/>
<dbReference type="eggNOG" id="ENOG502S30T">
    <property type="taxonomic scope" value="Eukaryota"/>
</dbReference>
<dbReference type="HOGENOM" id="CLU_087349_0_0_1"/>
<dbReference type="InParanoid" id="Q6BPN7"/>
<dbReference type="OMA" id="CITHFPN"/>
<dbReference type="OrthoDB" id="5377273at2759"/>
<dbReference type="Proteomes" id="UP000000599">
    <property type="component" value="Chromosome E"/>
</dbReference>
<dbReference type="GO" id="GO:0005789">
    <property type="term" value="C:endoplasmic reticulum membrane"/>
    <property type="evidence" value="ECO:0007669"/>
    <property type="project" value="UniProtKB-SubCell"/>
</dbReference>
<dbReference type="GO" id="GO:0031211">
    <property type="term" value="C:endoplasmic reticulum palmitoyltransferase complex"/>
    <property type="evidence" value="ECO:0007669"/>
    <property type="project" value="TreeGrafter"/>
</dbReference>
<dbReference type="GO" id="GO:0006612">
    <property type="term" value="P:protein targeting to membrane"/>
    <property type="evidence" value="ECO:0007669"/>
    <property type="project" value="TreeGrafter"/>
</dbReference>
<dbReference type="InterPro" id="IPR019383">
    <property type="entry name" value="Golgin_A_7/ERF4"/>
</dbReference>
<dbReference type="InterPro" id="IPR051371">
    <property type="entry name" value="Ras_palmitoyltransferase"/>
</dbReference>
<dbReference type="PANTHER" id="PTHR13254">
    <property type="entry name" value="GOLGI AUTOANTIGEN, GOLGIN SUBFAMILY A, 7"/>
    <property type="match status" value="1"/>
</dbReference>
<dbReference type="PANTHER" id="PTHR13254:SF0">
    <property type="entry name" value="GOLGIN SUBFAMILY A MEMBER 7_ERF4 DOMAIN-CONTAINING PROTEIN"/>
    <property type="match status" value="1"/>
</dbReference>
<dbReference type="Pfam" id="PF10256">
    <property type="entry name" value="Erf4"/>
    <property type="match status" value="1"/>
</dbReference>
<reference key="1">
    <citation type="journal article" date="2004" name="Nature">
        <title>Genome evolution in yeasts.</title>
        <authorList>
            <person name="Dujon B."/>
            <person name="Sherman D."/>
            <person name="Fischer G."/>
            <person name="Durrens P."/>
            <person name="Casaregola S."/>
            <person name="Lafontaine I."/>
            <person name="de Montigny J."/>
            <person name="Marck C."/>
            <person name="Neuveglise C."/>
            <person name="Talla E."/>
            <person name="Goffard N."/>
            <person name="Frangeul L."/>
            <person name="Aigle M."/>
            <person name="Anthouard V."/>
            <person name="Babour A."/>
            <person name="Barbe V."/>
            <person name="Barnay S."/>
            <person name="Blanchin S."/>
            <person name="Beckerich J.-M."/>
            <person name="Beyne E."/>
            <person name="Bleykasten C."/>
            <person name="Boisrame A."/>
            <person name="Boyer J."/>
            <person name="Cattolico L."/>
            <person name="Confanioleri F."/>
            <person name="de Daruvar A."/>
            <person name="Despons L."/>
            <person name="Fabre E."/>
            <person name="Fairhead C."/>
            <person name="Ferry-Dumazet H."/>
            <person name="Groppi A."/>
            <person name="Hantraye F."/>
            <person name="Hennequin C."/>
            <person name="Jauniaux N."/>
            <person name="Joyet P."/>
            <person name="Kachouri R."/>
            <person name="Kerrest A."/>
            <person name="Koszul R."/>
            <person name="Lemaire M."/>
            <person name="Lesur I."/>
            <person name="Ma L."/>
            <person name="Muller H."/>
            <person name="Nicaud J.-M."/>
            <person name="Nikolski M."/>
            <person name="Oztas S."/>
            <person name="Ozier-Kalogeropoulos O."/>
            <person name="Pellenz S."/>
            <person name="Potier S."/>
            <person name="Richard G.-F."/>
            <person name="Straub M.-L."/>
            <person name="Suleau A."/>
            <person name="Swennen D."/>
            <person name="Tekaia F."/>
            <person name="Wesolowski-Louvel M."/>
            <person name="Westhof E."/>
            <person name="Wirth B."/>
            <person name="Zeniou-Meyer M."/>
            <person name="Zivanovic Y."/>
            <person name="Bolotin-Fukuhara M."/>
            <person name="Thierry A."/>
            <person name="Bouchier C."/>
            <person name="Caudron B."/>
            <person name="Scarpelli C."/>
            <person name="Gaillardin C."/>
            <person name="Weissenbach J."/>
            <person name="Wincker P."/>
            <person name="Souciet J.-L."/>
        </authorList>
    </citation>
    <scope>NUCLEOTIDE SEQUENCE [LARGE SCALE GENOMIC DNA]</scope>
    <source>
        <strain>ATCC 36239 / CBS 767 / BCRC 21394 / JCM 1990 / NBRC 0083 / IGC 2968</strain>
    </source>
</reference>
<feature type="chain" id="PRO_0000213984" description="Ras modification protein ERF4">
    <location>
        <begin position="1"/>
        <end position="253"/>
    </location>
</feature>
<feature type="region of interest" description="Disordered" evidence="2">
    <location>
        <begin position="1"/>
        <end position="22"/>
    </location>
</feature>
<feature type="compositionally biased region" description="Basic and acidic residues" evidence="2">
    <location>
        <begin position="1"/>
        <end position="14"/>
    </location>
</feature>
<evidence type="ECO:0000250" key="1">
    <source>
        <dbReference type="UniProtKB" id="P41912"/>
    </source>
</evidence>
<evidence type="ECO:0000256" key="2">
    <source>
        <dbReference type="SAM" id="MobiDB-lite"/>
    </source>
</evidence>
<evidence type="ECO:0000305" key="3"/>
<proteinExistence type="inferred from homology"/>
<protein>
    <recommendedName>
        <fullName>Ras modification protein ERF4</fullName>
    </recommendedName>
</protein>
<name>ERFD_DEBHA</name>
<sequence length="253" mass="29168">MQESSTKHVVKEDNITNNGENENNGITEPLLFFNYHEFLTENYNVHPSCRHNSKARSIVVNHFPNNHVPIDSSMYSDTRIVRIPRIFNTIQLSDIIPQFSNYTPGTEPAAINDQQGFTFKPVGIYDNNSFGETSVTPLVPGYMTEEEFHTIIDNINKYLHEAFSPYNVWNLFDSILDLLSANFYNKIVNNFLVDTYSKRKLLELEMYIENDINLGMFASRPGLKILSPRKSGYLSVCIDYYNSHQNHCTNYLA</sequence>
<accession>Q6BPN7</accession>
<gene>
    <name type="primary">ERF4</name>
    <name type="ordered locus">DEHA2E12122g</name>
</gene>
<keyword id="KW-0256">Endoplasmic reticulum</keyword>
<keyword id="KW-0472">Membrane</keyword>
<keyword id="KW-1185">Reference proteome</keyword>
<comment type="function">
    <text evidence="1">The ERF2-ERF4 complex is a palmitoyltransferase specific for Ras proteins. Palmitoylates RAS2, which is required for its proper plasma membrane localization (By similarity).</text>
</comment>
<comment type="subunit">
    <text evidence="1">Interacts with ERF2.</text>
</comment>
<comment type="subcellular location">
    <subcellularLocation>
        <location evidence="1">Endoplasmic reticulum membrane</location>
        <topology evidence="1">Peripheral membrane protein</topology>
    </subcellularLocation>
</comment>
<comment type="similarity">
    <text evidence="3">Belongs to the ERF4 family.</text>
</comment>